<dbReference type="EMBL" id="D12533">
    <property type="protein sequence ID" value="BAA02096.1"/>
    <property type="molecule type" value="Genomic_RNA"/>
</dbReference>
<dbReference type="EMBL" id="X56676">
    <property type="protein sequence ID" value="CAA39999.1"/>
    <property type="molecule type" value="mRNA"/>
</dbReference>
<dbReference type="PIR" id="JQ1946">
    <property type="entry name" value="JQ1946"/>
</dbReference>
<dbReference type="RefSeq" id="YP_052956.1">
    <property type="nucleotide sequence ID" value="NC_006011.1"/>
</dbReference>
<dbReference type="PDB" id="1AHS">
    <property type="method" value="X-ray"/>
    <property type="resolution" value="2.30 A"/>
    <property type="chains" value="A/B/C=126-251"/>
</dbReference>
<dbReference type="PDBsum" id="1AHS"/>
<dbReference type="SMR" id="P36325"/>
<dbReference type="GlyCosmos" id="P36325">
    <property type="glycosylation" value="1 site, No reported glycans"/>
</dbReference>
<dbReference type="KEGG" id="vg:2943145"/>
<dbReference type="EvolutionaryTrace" id="P36325"/>
<dbReference type="Proteomes" id="UP000201896">
    <property type="component" value="Genome"/>
</dbReference>
<dbReference type="GO" id="GO:0019031">
    <property type="term" value="C:viral envelope"/>
    <property type="evidence" value="ECO:0007669"/>
    <property type="project" value="InterPro"/>
</dbReference>
<dbReference type="GO" id="GO:0039624">
    <property type="term" value="C:viral outer capsid"/>
    <property type="evidence" value="ECO:0007669"/>
    <property type="project" value="UniProtKB-KW"/>
</dbReference>
<dbReference type="GO" id="GO:0046789">
    <property type="term" value="F:host cell surface receptor binding"/>
    <property type="evidence" value="ECO:0007669"/>
    <property type="project" value="InterPro"/>
</dbReference>
<dbReference type="GO" id="GO:0005198">
    <property type="term" value="F:structural molecule activity"/>
    <property type="evidence" value="ECO:0007669"/>
    <property type="project" value="InterPro"/>
</dbReference>
<dbReference type="GO" id="GO:0019064">
    <property type="term" value="P:fusion of virus membrane with host plasma membrane"/>
    <property type="evidence" value="ECO:0007669"/>
    <property type="project" value="InterPro"/>
</dbReference>
<dbReference type="Gene3D" id="2.60.120.170">
    <property type="match status" value="1"/>
</dbReference>
<dbReference type="Gene3D" id="1.10.250.10">
    <property type="entry name" value="Bluetongue Virus 10, subunit 1, domain 1"/>
    <property type="match status" value="1"/>
</dbReference>
<dbReference type="Gene3D" id="1.10.170.10">
    <property type="entry name" value="Bluetongue Virus 10, subunit 1, domain 3"/>
    <property type="match status" value="1"/>
</dbReference>
<dbReference type="InterPro" id="IPR008980">
    <property type="entry name" value="Capsid_hemagglutn"/>
</dbReference>
<dbReference type="InterPro" id="IPR001803">
    <property type="entry name" value="Orbi_VP7_capsid"/>
</dbReference>
<dbReference type="InterPro" id="IPR023178">
    <property type="entry name" value="Orbi_VP7_capsid_C"/>
</dbReference>
<dbReference type="InterPro" id="IPR023176">
    <property type="entry name" value="Orbi_VP7_capsid_N"/>
</dbReference>
<dbReference type="InterPro" id="IPR008935">
    <property type="entry name" value="Virus_capsid_a-hlx_vir"/>
</dbReference>
<dbReference type="Pfam" id="PF00897">
    <property type="entry name" value="Orbi_VP7"/>
    <property type="match status" value="1"/>
</dbReference>
<dbReference type="PRINTS" id="PR00903">
    <property type="entry name" value="VP7CAPSID"/>
</dbReference>
<dbReference type="SUPFAM" id="SSF48345">
    <property type="entry name" value="A virus capsid protein alpha-helical domain"/>
    <property type="match status" value="1"/>
</dbReference>
<dbReference type="SUPFAM" id="SSF49818">
    <property type="entry name" value="Viral protein domain"/>
    <property type="match status" value="1"/>
</dbReference>
<sequence>MDAIAARALSVVRACVTVTDARVSLDPGVMETLGIAINRYNGLTNHSVSMRPQTQAERNEMFFMCTDMVLAALNVQIGNISPDYDQALATVGALATTEIPYNVQAMNDIVRITGQMQTFGPSKVQTGPYAGAVEVQQSGRYYVPQGRTRGGYINSNIAEVCMDAGAAGQVNALLAPRRGDAVMIYFVWRPLRIFCDPQGASLESAPGTFVTVDGVNVAAGDVVAWNTIAPVNVGNPGARRSILQFEVLWYTSLDRSLDTVPELAPTLTRCYAYVSPTWHALRAVIFQQMNMQPINPPIFPPTERNEIVAYLLLVASLADVYAALRPDFRMNGVVAPVGQINRALVLAAYH</sequence>
<accession>P36325</accession>
<evidence type="ECO:0000255" key="1"/>
<evidence type="ECO:0000305" key="2"/>
<evidence type="ECO:0007829" key="3">
    <source>
        <dbReference type="PDB" id="1AHS"/>
    </source>
</evidence>
<reference key="1">
    <citation type="journal article" date="1991" name="J. Gen. Virol.">
        <title>The complete sequence of the group-specific antigen, VP7, of African horsesickness disease virus serotype 4 reveals a close relationship to bluetongue virus.</title>
        <authorList>
            <person name="Roy P."/>
            <person name="Hirasawa T."/>
            <person name="Fernandez M."/>
            <person name="Blinov V.M."/>
            <person name="Sanchez-Vixcain Rodrique J.M."/>
        </authorList>
    </citation>
    <scope>NUCLEOTIDE SEQUENCE [GENOMIC RNA]</scope>
    <source>
        <strain>Serotype 4</strain>
    </source>
</reference>
<reference key="2">
    <citation type="journal article" date="1996" name="J. Virol.">
        <title>Crystal structure of the top domain of African horse sickness virus VP7: comparisons with bluetongue virus VP7.</title>
        <authorList>
            <person name="Basak A.K."/>
            <person name="Gouet P."/>
            <person name="Grimes J."/>
            <person name="Roy P."/>
            <person name="Stuart D."/>
        </authorList>
    </citation>
    <scope>X-RAY CRYSTALLOGRAPHY (2.3 ANGSTROMS)</scope>
    <scope>SEQUENCE REVISION TO 207</scope>
    <source>
        <strain>Serotype 4</strain>
    </source>
</reference>
<comment type="function">
    <text>Major structural core protein; binds to structural protein VP3. Constitutes the surface of the AHSV core.</text>
</comment>
<comment type="subunit">
    <text>Homotrimer.</text>
</comment>
<comment type="subcellular location">
    <subcellularLocation>
        <location evidence="2">Virion</location>
    </subcellularLocation>
</comment>
<comment type="similarity">
    <text evidence="2">Belongs to the orbivirus VP7 family.</text>
</comment>
<keyword id="KW-0002">3D-structure</keyword>
<keyword id="KW-0167">Capsid protein</keyword>
<keyword id="KW-0325">Glycoprotein</keyword>
<keyword id="KW-1152">Outer capsid protein</keyword>
<keyword id="KW-0946">Virion</keyword>
<name>VP7_AHSV</name>
<protein>
    <recommendedName>
        <fullName>Core protein VP7</fullName>
    </recommendedName>
    <alternativeName>
        <fullName>Capsid protein VP7</fullName>
    </alternativeName>
    <alternativeName>
        <fullName>VP7 antigen</fullName>
    </alternativeName>
</protein>
<proteinExistence type="evidence at protein level"/>
<feature type="chain" id="PRO_0000222736" description="Core protein VP7">
    <location>
        <begin position="1"/>
        <end position="350"/>
    </location>
</feature>
<feature type="glycosylation site" description="N-linked (GlcNAc...) asparagine; by host" evidence="1">
    <location>
        <position position="45"/>
    </location>
</feature>
<feature type="sequence conflict" description="In Ref. 1." evidence="2" ref="1">
    <original>G</original>
    <variation>GAPG</variation>
    <location>
        <position position="207"/>
    </location>
</feature>
<feature type="turn" evidence="3">
    <location>
        <begin position="128"/>
        <end position="131"/>
    </location>
</feature>
<feature type="strand" evidence="3">
    <location>
        <begin position="144"/>
        <end position="154"/>
    </location>
</feature>
<feature type="strand" evidence="3">
    <location>
        <begin position="157"/>
        <end position="162"/>
    </location>
</feature>
<feature type="strand" evidence="3">
    <location>
        <begin position="166"/>
        <end position="169"/>
    </location>
</feature>
<feature type="helix" evidence="3">
    <location>
        <begin position="171"/>
        <end position="174"/>
    </location>
</feature>
<feature type="turn" evidence="3">
    <location>
        <begin position="178"/>
        <end position="180"/>
    </location>
</feature>
<feature type="strand" evidence="3">
    <location>
        <begin position="184"/>
        <end position="195"/>
    </location>
</feature>
<feature type="strand" evidence="3">
    <location>
        <begin position="209"/>
        <end position="212"/>
    </location>
</feature>
<feature type="strand" evidence="3">
    <location>
        <begin position="215"/>
        <end position="217"/>
    </location>
</feature>
<feature type="strand" evidence="3">
    <location>
        <begin position="223"/>
        <end position="225"/>
    </location>
</feature>
<feature type="strand" evidence="3">
    <location>
        <begin position="227"/>
        <end position="229"/>
    </location>
</feature>
<feature type="strand" evidence="3">
    <location>
        <begin position="231"/>
        <end position="235"/>
    </location>
</feature>
<feature type="strand" evidence="3">
    <location>
        <begin position="237"/>
        <end position="239"/>
    </location>
</feature>
<feature type="strand" evidence="3">
    <location>
        <begin position="241"/>
        <end position="250"/>
    </location>
</feature>
<gene>
    <name type="primary">Segment-7</name>
</gene>
<organism>
    <name type="scientific">African horse sickness virus</name>
    <name type="common">AHSV</name>
    <name type="synonym">Orbivirus alphaequi</name>
    <dbReference type="NCBI Taxonomy" id="40050"/>
    <lineage>
        <taxon>Viruses</taxon>
        <taxon>Riboviria</taxon>
        <taxon>Orthornavirae</taxon>
        <taxon>Duplornaviricota</taxon>
        <taxon>Resentoviricetes</taxon>
        <taxon>Reovirales</taxon>
        <taxon>Sedoreoviridae</taxon>
        <taxon>Orbivirus</taxon>
    </lineage>
</organism>